<dbReference type="EMBL" id="AY864351">
    <property type="protein sequence ID" value="AAW62966.1"/>
    <property type="status" value="ALT_SEQ"/>
    <property type="molecule type" value="Genomic_DNA"/>
</dbReference>
<dbReference type="EMBL" id="FJ375310">
    <property type="protein sequence ID" value="ACJ11249.1"/>
    <property type="molecule type" value="mRNA"/>
</dbReference>
<dbReference type="EMBL" id="AB020749">
    <property type="protein sequence ID" value="BAB02023.1"/>
    <property type="molecule type" value="Genomic_DNA"/>
</dbReference>
<dbReference type="EMBL" id="CP002686">
    <property type="protein sequence ID" value="AEE76049.1"/>
    <property type="molecule type" value="Genomic_DNA"/>
</dbReference>
<dbReference type="RefSeq" id="NP_188439.2">
    <property type="nucleotide sequence ID" value="NM_112693.4"/>
</dbReference>
<dbReference type="SMR" id="Q5G1S8"/>
<dbReference type="FunCoup" id="Q5G1S8">
    <property type="interactions" value="1416"/>
</dbReference>
<dbReference type="STRING" id="3702.Q5G1S8"/>
<dbReference type="GlyGen" id="Q5G1S8">
    <property type="glycosylation" value="1 site"/>
</dbReference>
<dbReference type="PaxDb" id="3702-AT3G18110.1"/>
<dbReference type="ProteomicsDB" id="248952"/>
<dbReference type="EnsemblPlants" id="AT3G18110.1">
    <property type="protein sequence ID" value="AT3G18110.1"/>
    <property type="gene ID" value="AT3G18110"/>
</dbReference>
<dbReference type="GeneID" id="821336"/>
<dbReference type="Gramene" id="AT3G18110.1">
    <property type="protein sequence ID" value="AT3G18110.1"/>
    <property type="gene ID" value="AT3G18110"/>
</dbReference>
<dbReference type="KEGG" id="ath:AT3G18110"/>
<dbReference type="Araport" id="AT3G18110"/>
<dbReference type="TAIR" id="AT3G18110">
    <property type="gene designation" value="EMB1270"/>
</dbReference>
<dbReference type="eggNOG" id="KOG4197">
    <property type="taxonomic scope" value="Eukaryota"/>
</dbReference>
<dbReference type="HOGENOM" id="CLU_001756_0_0_1"/>
<dbReference type="InParanoid" id="Q5G1S8"/>
<dbReference type="OMA" id="VWNALIQ"/>
<dbReference type="PhylomeDB" id="Q5G1S8"/>
<dbReference type="PRO" id="PR:Q5G1S8"/>
<dbReference type="Proteomes" id="UP000006548">
    <property type="component" value="Chromosome 3"/>
</dbReference>
<dbReference type="ExpressionAtlas" id="Q5G1S8">
    <property type="expression patterns" value="baseline and differential"/>
</dbReference>
<dbReference type="GO" id="GO:0009507">
    <property type="term" value="C:chloroplast"/>
    <property type="evidence" value="ECO:0000314"/>
    <property type="project" value="TAIR"/>
</dbReference>
<dbReference type="GO" id="GO:0009570">
    <property type="term" value="C:chloroplast stroma"/>
    <property type="evidence" value="ECO:0000314"/>
    <property type="project" value="TAIR"/>
</dbReference>
<dbReference type="GO" id="GO:0009534">
    <property type="term" value="C:chloroplast thylakoid"/>
    <property type="evidence" value="ECO:0000314"/>
    <property type="project" value="TAIR"/>
</dbReference>
<dbReference type="GO" id="GO:0003723">
    <property type="term" value="F:RNA binding"/>
    <property type="evidence" value="ECO:0000314"/>
    <property type="project" value="TAIR"/>
</dbReference>
<dbReference type="GO" id="GO:0031425">
    <property type="term" value="P:chloroplast RNA processing"/>
    <property type="evidence" value="ECO:0000315"/>
    <property type="project" value="TAIR"/>
</dbReference>
<dbReference type="GO" id="GO:0009793">
    <property type="term" value="P:embryo development ending in seed dormancy"/>
    <property type="evidence" value="ECO:0000315"/>
    <property type="project" value="TAIR"/>
</dbReference>
<dbReference type="FunFam" id="1.25.40.10:FF:002187">
    <property type="entry name" value="Pentatricopeptide repeat-containing protein At3g18110, chloroplastic"/>
    <property type="match status" value="1"/>
</dbReference>
<dbReference type="Gene3D" id="1.25.40.10">
    <property type="entry name" value="Tetratricopeptide repeat domain"/>
    <property type="match status" value="9"/>
</dbReference>
<dbReference type="InterPro" id="IPR002885">
    <property type="entry name" value="Pentatricopeptide_rpt"/>
</dbReference>
<dbReference type="InterPro" id="IPR033443">
    <property type="entry name" value="PROP1-like_PPR_dom"/>
</dbReference>
<dbReference type="InterPro" id="IPR011990">
    <property type="entry name" value="TPR-like_helical_dom_sf"/>
</dbReference>
<dbReference type="NCBIfam" id="TIGR00756">
    <property type="entry name" value="PPR"/>
    <property type="match status" value="14"/>
</dbReference>
<dbReference type="PANTHER" id="PTHR47447:SF26">
    <property type="entry name" value="CHLOROPLAST RNA SPLICING4"/>
    <property type="match status" value="1"/>
</dbReference>
<dbReference type="PANTHER" id="PTHR47447">
    <property type="entry name" value="OS03G0856100 PROTEIN"/>
    <property type="match status" value="1"/>
</dbReference>
<dbReference type="Pfam" id="PF01535">
    <property type="entry name" value="PPR"/>
    <property type="match status" value="6"/>
</dbReference>
<dbReference type="Pfam" id="PF13041">
    <property type="entry name" value="PPR_2"/>
    <property type="match status" value="4"/>
</dbReference>
<dbReference type="Pfam" id="PF13812">
    <property type="entry name" value="PPR_3"/>
    <property type="match status" value="1"/>
</dbReference>
<dbReference type="Pfam" id="PF17177">
    <property type="entry name" value="PPR_long"/>
    <property type="match status" value="1"/>
</dbReference>
<dbReference type="SUPFAM" id="SSF48452">
    <property type="entry name" value="TPR-like"/>
    <property type="match status" value="1"/>
</dbReference>
<dbReference type="PROSITE" id="PS51375">
    <property type="entry name" value="PPR"/>
    <property type="match status" value="24"/>
</dbReference>
<name>PP241_ARATH</name>
<protein>
    <recommendedName>
        <fullName>Pentatricopeptide repeat-containing protein At3g18110, chloroplastic</fullName>
    </recommendedName>
    <alternativeName>
        <fullName>Protein EMBRYO DEFECTIVE 1270</fullName>
    </alternativeName>
</protein>
<gene>
    <name type="primary">EMB1270</name>
    <name type="ordered locus">At3g18110</name>
    <name type="ORF">MRC8.9</name>
</gene>
<reference key="1">
    <citation type="journal article" date="2005" name="Planta">
        <title>Arabidopsis emb175 and other ppr knockout mutants reveal essential roles for pentatricopeptide repeat (PPR) proteins in plant embryogenesis.</title>
        <authorList>
            <person name="Cushing D.A."/>
            <person name="Forsthoefel N.R."/>
            <person name="Gestaut D.R."/>
            <person name="Vernon D.M."/>
        </authorList>
    </citation>
    <scope>NUCLEOTIDE SEQUENCE [GENOMIC DNA / MRNA]</scope>
    <scope>FUNCTION</scope>
    <source>
        <strain>cv. Columbia</strain>
    </source>
</reference>
<reference key="2">
    <citation type="journal article" date="2000" name="DNA Res.">
        <title>Structural analysis of Arabidopsis thaliana chromosome 3. II. Sequence features of the 4,251,695 bp regions covered by 90 P1, TAC and BAC clones.</title>
        <authorList>
            <person name="Kaneko T."/>
            <person name="Katoh T."/>
            <person name="Sato S."/>
            <person name="Nakamura Y."/>
            <person name="Asamizu E."/>
            <person name="Tabata S."/>
        </authorList>
    </citation>
    <scope>NUCLEOTIDE SEQUENCE [LARGE SCALE GENOMIC DNA]</scope>
    <source>
        <strain>cv. Columbia</strain>
    </source>
</reference>
<reference key="3">
    <citation type="journal article" date="2017" name="Plant J.">
        <title>Araport11: a complete reannotation of the Arabidopsis thaliana reference genome.</title>
        <authorList>
            <person name="Cheng C.Y."/>
            <person name="Krishnakumar V."/>
            <person name="Chan A.P."/>
            <person name="Thibaud-Nissen F."/>
            <person name="Schobel S."/>
            <person name="Town C.D."/>
        </authorList>
    </citation>
    <scope>GENOME REANNOTATION</scope>
    <source>
        <strain>cv. Columbia</strain>
    </source>
</reference>
<reference key="4">
    <citation type="journal article" date="2004" name="Plant Cell">
        <title>Genome-wide analysis of Arabidopsis pentatricopeptide repeat proteins reveals their essential role in organelle biogenesis.</title>
        <authorList>
            <person name="Lurin C."/>
            <person name="Andres C."/>
            <person name="Aubourg S."/>
            <person name="Bellaoui M."/>
            <person name="Bitton F."/>
            <person name="Bruyere C."/>
            <person name="Caboche M."/>
            <person name="Debast C."/>
            <person name="Gualberto J."/>
            <person name="Hoffmann B."/>
            <person name="Lecharny A."/>
            <person name="Le Ret M."/>
            <person name="Martin-Magniette M.-L."/>
            <person name="Mireau H."/>
            <person name="Peeters N."/>
            <person name="Renou J.-P."/>
            <person name="Szurek B."/>
            <person name="Taconnat L."/>
            <person name="Small I."/>
        </authorList>
    </citation>
    <scope>GENE FAMILY</scope>
</reference>
<feature type="transit peptide" description="Chloroplast" evidence="1">
    <location>
        <begin position="1"/>
        <end position="44"/>
    </location>
</feature>
<feature type="chain" id="PRO_0000356100" description="Pentatricopeptide repeat-containing protein At3g18110, chloroplastic">
    <location>
        <begin position="45"/>
        <end position="1440"/>
    </location>
</feature>
<feature type="repeat" description="PPR 1">
    <location>
        <begin position="224"/>
        <end position="258"/>
    </location>
</feature>
<feature type="repeat" description="PPR 2">
    <location>
        <begin position="259"/>
        <end position="295"/>
    </location>
</feature>
<feature type="repeat" description="PPR 3">
    <location>
        <begin position="296"/>
        <end position="330"/>
    </location>
</feature>
<feature type="repeat" description="PPR 4">
    <location>
        <begin position="331"/>
        <end position="365"/>
    </location>
</feature>
<feature type="repeat" description="PPR 5">
    <location>
        <begin position="366"/>
        <end position="400"/>
    </location>
</feature>
<feature type="repeat" description="PPR 6">
    <location>
        <begin position="401"/>
        <end position="431"/>
    </location>
</feature>
<feature type="repeat" description="PPR 7">
    <location>
        <begin position="437"/>
        <end position="471"/>
    </location>
</feature>
<feature type="repeat" description="PPR 8">
    <location>
        <begin position="472"/>
        <end position="506"/>
    </location>
</feature>
<feature type="repeat" description="PPR 9">
    <location>
        <begin position="507"/>
        <end position="541"/>
    </location>
</feature>
<feature type="repeat" description="PPR 10">
    <location>
        <begin position="542"/>
        <end position="572"/>
    </location>
</feature>
<feature type="repeat" description="PPR 11">
    <location>
        <begin position="608"/>
        <end position="638"/>
    </location>
</feature>
<feature type="repeat" description="PPR 12">
    <location>
        <begin position="643"/>
        <end position="678"/>
    </location>
</feature>
<feature type="repeat" description="PPR 13">
    <location>
        <begin position="680"/>
        <end position="714"/>
    </location>
</feature>
<feature type="repeat" description="PPR 14">
    <location>
        <begin position="715"/>
        <end position="749"/>
    </location>
</feature>
<feature type="repeat" description="PPR 15">
    <location>
        <begin position="751"/>
        <end position="785"/>
    </location>
</feature>
<feature type="repeat" description="PPR 16">
    <location>
        <begin position="786"/>
        <end position="820"/>
    </location>
</feature>
<feature type="repeat" description="PPR 17">
    <location>
        <begin position="821"/>
        <end position="855"/>
    </location>
</feature>
<feature type="repeat" description="PPR 18">
    <location>
        <begin position="856"/>
        <end position="890"/>
    </location>
</feature>
<feature type="repeat" description="PPR 19">
    <location>
        <begin position="891"/>
        <end position="925"/>
    </location>
</feature>
<feature type="repeat" description="PPR 20">
    <location>
        <begin position="926"/>
        <end position="960"/>
    </location>
</feature>
<feature type="repeat" description="PPR 21">
    <location>
        <begin position="961"/>
        <end position="995"/>
    </location>
</feature>
<feature type="repeat" description="PPR 22">
    <location>
        <begin position="996"/>
        <end position="1030"/>
    </location>
</feature>
<feature type="repeat" description="PPR 23">
    <location>
        <begin position="1031"/>
        <end position="1065"/>
    </location>
</feature>
<feature type="repeat" description="PPR 24">
    <location>
        <begin position="1066"/>
        <end position="1100"/>
    </location>
</feature>
<feature type="repeat" description="PPR 25">
    <location>
        <begin position="1101"/>
        <end position="1135"/>
    </location>
</feature>
<feature type="region of interest" description="Disordered" evidence="2">
    <location>
        <begin position="63"/>
        <end position="84"/>
    </location>
</feature>
<feature type="region of interest" description="Disordered" evidence="2">
    <location>
        <begin position="1419"/>
        <end position="1440"/>
    </location>
</feature>
<feature type="compositionally biased region" description="Polar residues" evidence="2">
    <location>
        <begin position="63"/>
        <end position="72"/>
    </location>
</feature>
<accession>Q5G1S8</accession>
<accession>B6VCZ6</accession>
<accession>Q9LV30</accession>
<comment type="function">
    <text evidence="3">May play a role in embryogenesis.</text>
</comment>
<comment type="subcellular location">
    <subcellularLocation>
        <location evidence="4">Plastid</location>
        <location evidence="4">Chloroplast</location>
    </subcellularLocation>
</comment>
<comment type="similarity">
    <text evidence="4">Belongs to the PPR family. P subfamily.</text>
</comment>
<comment type="sequence caution" evidence="4">
    <conflict type="erroneous gene model prediction">
        <sequence resource="EMBL-CDS" id="AAW62966"/>
    </conflict>
</comment>
<comment type="online information" name="Pentatricopeptide repeat proteins">
    <link uri="https://ppr.plantenergy.uwa.edu.au"/>
</comment>
<sequence length="1440" mass="162337">MAVSAGALAFPALSVRATLNPEIKDEQANISSTTSSSQKFTYSRASPAVRWPHLNLREIYDSTPSQTLSSPVSPIAGTPDSGDVVDSIASREEQKTKDETAVATRRRRVKKMNKVALIKAKDWRERVKFLTDKILSLKSNQFVADILDARLVQMTPTDYCFVVKSVGQESWQRALEVFEWLNLRHWHSPNARMVAAILGVLGRWNQESLAVEIFTRAEPTVGDRVQVYNAMMGVYSRSGKFSKAQELVDAMRQRGCVPDLISFNTLINARLKSGGLTPNLAVELLDMVRNSGLRPDAITYNTLLSACSRDSNLDGAVKVFEDMEAHRCQPDLWTYNAMISVYGRCGLAAEAERLFMELELKGFFPDAVTYNSLLYAFARERNTEKVKEVYQQMQKMGFGKDEMTYNTIIHMYGKQGQLDLALQLYKDMKGLSGRNPDAITYTVLIDSLGKANRTVEAAALMSEMLDVGIKPTLQTYSALICGYAKAGKREEAEDTFSCMLRSGTKPDNLAYSVMLDVLLRGNETRKAWGLYRDMISDGHTPSYTLYELMILGLMKENRSDDIQKTIRDMEELCGMNPLEISSVLVKGECFDLAARQLKVAITNGYELENDTLLSILGSYSSSGRHSEAFELLEFLKEHASGSKRLITEALIVLHCKVNNLSAALDEYFADPCVHGWCFGSSTMYETLLHCCVANEHYAEASQVFSDLRLSGCEASESVCKSMVVVYCKLGFPETAHQVVNQAETKGFHFACSPMYTDIIEAYGKQKLWQKAESVVGNLRQSGRTPDLKTWNSLMSAYAQCGCYERARAIFNTMMRDGPSPTVESINILLHALCVDGRLEELYVVVEELQDMGFKISKSSILLMLDAFARAGNIFEVKKIYSSMKAAGYLPTIRLYRMMIELLCKGKRVRDAEIMVSEMEEANFKVELAIWNSMLKMYTAIEDYKKTVQVYQRIKETGLEPDETTYNTLIIMYCRDRRPEEGYLLMQQMRNLGLDPKLDTYKSLISAFGKQKCLEQAEQLFEELLSKGLKLDRSFYHTMMKISRDSGSDSKAEKLLQMMKNAGIEPTLATMHLLMVSYSSSGNPQEAEKVLSNLKDTEVELTTLPYSSVIDAYLRSKDYNSGIERLLEMKKEGLEPDHRIWTCFVRAASFSKEKIEVMLLLKALEDIGFDLPIRLLAGRPELLVSEVDGWFEKLKSIEDNAALNFVNALLNLLWAFELRATASWVFQLGIKRGIFSLDVFRVADKDWGADFRRLSGGAALVALTLWLDHMQDASLEGYPESPKSVVLITGTAEYNGISLDKTLKACLWEMGSPFLPCKTRTGLLVAKAHSLRMWLKDSPFCFDLELKDSVSLPESNSMDLIDGCFIRRGLVPAFNHIKERLGGFVSPKKFSRLALLPDEMRERVIKTDIEGHRQKLEKMKKKKMGNETNGINTRRKFVRSK</sequence>
<evidence type="ECO:0000255" key="1"/>
<evidence type="ECO:0000256" key="2">
    <source>
        <dbReference type="SAM" id="MobiDB-lite"/>
    </source>
</evidence>
<evidence type="ECO:0000269" key="3">
    <source>
    </source>
</evidence>
<evidence type="ECO:0000305" key="4"/>
<organism>
    <name type="scientific">Arabidopsis thaliana</name>
    <name type="common">Mouse-ear cress</name>
    <dbReference type="NCBI Taxonomy" id="3702"/>
    <lineage>
        <taxon>Eukaryota</taxon>
        <taxon>Viridiplantae</taxon>
        <taxon>Streptophyta</taxon>
        <taxon>Embryophyta</taxon>
        <taxon>Tracheophyta</taxon>
        <taxon>Spermatophyta</taxon>
        <taxon>Magnoliopsida</taxon>
        <taxon>eudicotyledons</taxon>
        <taxon>Gunneridae</taxon>
        <taxon>Pentapetalae</taxon>
        <taxon>rosids</taxon>
        <taxon>malvids</taxon>
        <taxon>Brassicales</taxon>
        <taxon>Brassicaceae</taxon>
        <taxon>Camelineae</taxon>
        <taxon>Arabidopsis</taxon>
    </lineage>
</organism>
<keyword id="KW-0150">Chloroplast</keyword>
<keyword id="KW-0934">Plastid</keyword>
<keyword id="KW-1185">Reference proteome</keyword>
<keyword id="KW-0677">Repeat</keyword>
<keyword id="KW-0809">Transit peptide</keyword>
<proteinExistence type="evidence at transcript level"/>